<proteinExistence type="inferred from homology"/>
<gene>
    <name evidence="1" type="primary">clpP1</name>
    <name type="ordered locus">Meso_1169</name>
</gene>
<dbReference type="EC" id="3.4.21.92" evidence="1"/>
<dbReference type="EMBL" id="CP000390">
    <property type="protein sequence ID" value="ABG62565.1"/>
    <property type="molecule type" value="Genomic_DNA"/>
</dbReference>
<dbReference type="SMR" id="Q11J60"/>
<dbReference type="STRING" id="266779.Meso_1169"/>
<dbReference type="MEROPS" id="S14.001"/>
<dbReference type="KEGG" id="mes:Meso_1169"/>
<dbReference type="eggNOG" id="COG0740">
    <property type="taxonomic scope" value="Bacteria"/>
</dbReference>
<dbReference type="HOGENOM" id="CLU_058707_3_2_5"/>
<dbReference type="OrthoDB" id="9802800at2"/>
<dbReference type="GO" id="GO:0005737">
    <property type="term" value="C:cytoplasm"/>
    <property type="evidence" value="ECO:0007669"/>
    <property type="project" value="UniProtKB-SubCell"/>
</dbReference>
<dbReference type="GO" id="GO:0009368">
    <property type="term" value="C:endopeptidase Clp complex"/>
    <property type="evidence" value="ECO:0007669"/>
    <property type="project" value="TreeGrafter"/>
</dbReference>
<dbReference type="GO" id="GO:0004176">
    <property type="term" value="F:ATP-dependent peptidase activity"/>
    <property type="evidence" value="ECO:0007669"/>
    <property type="project" value="InterPro"/>
</dbReference>
<dbReference type="GO" id="GO:0051117">
    <property type="term" value="F:ATPase binding"/>
    <property type="evidence" value="ECO:0007669"/>
    <property type="project" value="TreeGrafter"/>
</dbReference>
<dbReference type="GO" id="GO:0004252">
    <property type="term" value="F:serine-type endopeptidase activity"/>
    <property type="evidence" value="ECO:0007669"/>
    <property type="project" value="UniProtKB-UniRule"/>
</dbReference>
<dbReference type="GO" id="GO:0006515">
    <property type="term" value="P:protein quality control for misfolded or incompletely synthesized proteins"/>
    <property type="evidence" value="ECO:0007669"/>
    <property type="project" value="TreeGrafter"/>
</dbReference>
<dbReference type="CDD" id="cd07017">
    <property type="entry name" value="S14_ClpP_2"/>
    <property type="match status" value="1"/>
</dbReference>
<dbReference type="FunFam" id="3.90.226.10:FF:000001">
    <property type="entry name" value="ATP-dependent Clp protease proteolytic subunit"/>
    <property type="match status" value="1"/>
</dbReference>
<dbReference type="Gene3D" id="3.90.226.10">
    <property type="entry name" value="2-enoyl-CoA Hydratase, Chain A, domain 1"/>
    <property type="match status" value="1"/>
</dbReference>
<dbReference type="HAMAP" id="MF_00444">
    <property type="entry name" value="ClpP"/>
    <property type="match status" value="1"/>
</dbReference>
<dbReference type="InterPro" id="IPR001907">
    <property type="entry name" value="ClpP"/>
</dbReference>
<dbReference type="InterPro" id="IPR029045">
    <property type="entry name" value="ClpP/crotonase-like_dom_sf"/>
</dbReference>
<dbReference type="InterPro" id="IPR023562">
    <property type="entry name" value="ClpP/TepA"/>
</dbReference>
<dbReference type="InterPro" id="IPR033135">
    <property type="entry name" value="ClpP_His_AS"/>
</dbReference>
<dbReference type="InterPro" id="IPR018215">
    <property type="entry name" value="ClpP_Ser_AS"/>
</dbReference>
<dbReference type="NCBIfam" id="NF001368">
    <property type="entry name" value="PRK00277.1"/>
    <property type="match status" value="1"/>
</dbReference>
<dbReference type="NCBIfam" id="NF009205">
    <property type="entry name" value="PRK12553.1"/>
    <property type="match status" value="1"/>
</dbReference>
<dbReference type="PANTHER" id="PTHR10381">
    <property type="entry name" value="ATP-DEPENDENT CLP PROTEASE PROTEOLYTIC SUBUNIT"/>
    <property type="match status" value="1"/>
</dbReference>
<dbReference type="PANTHER" id="PTHR10381:SF70">
    <property type="entry name" value="ATP-DEPENDENT CLP PROTEASE PROTEOLYTIC SUBUNIT"/>
    <property type="match status" value="1"/>
</dbReference>
<dbReference type="Pfam" id="PF00574">
    <property type="entry name" value="CLP_protease"/>
    <property type="match status" value="1"/>
</dbReference>
<dbReference type="PRINTS" id="PR00127">
    <property type="entry name" value="CLPPROTEASEP"/>
</dbReference>
<dbReference type="SUPFAM" id="SSF52096">
    <property type="entry name" value="ClpP/crotonase"/>
    <property type="match status" value="1"/>
</dbReference>
<dbReference type="PROSITE" id="PS00382">
    <property type="entry name" value="CLP_PROTEASE_HIS"/>
    <property type="match status" value="1"/>
</dbReference>
<dbReference type="PROSITE" id="PS00381">
    <property type="entry name" value="CLP_PROTEASE_SER"/>
    <property type="match status" value="1"/>
</dbReference>
<organism>
    <name type="scientific">Chelativorans sp. (strain BNC1)</name>
    <dbReference type="NCBI Taxonomy" id="266779"/>
    <lineage>
        <taxon>Bacteria</taxon>
        <taxon>Pseudomonadati</taxon>
        <taxon>Pseudomonadota</taxon>
        <taxon>Alphaproteobacteria</taxon>
        <taxon>Hyphomicrobiales</taxon>
        <taxon>Phyllobacteriaceae</taxon>
        <taxon>Chelativorans</taxon>
    </lineage>
</organism>
<protein>
    <recommendedName>
        <fullName evidence="1">ATP-dependent Clp protease proteolytic subunit 1</fullName>
        <ecNumber evidence="1">3.4.21.92</ecNumber>
    </recommendedName>
    <alternativeName>
        <fullName evidence="1">Endopeptidase Clp 1</fullName>
    </alternativeName>
</protein>
<evidence type="ECO:0000255" key="1">
    <source>
        <dbReference type="HAMAP-Rule" id="MF_00444"/>
    </source>
</evidence>
<accession>Q11J60</accession>
<comment type="function">
    <text evidence="1">Cleaves peptides in various proteins in a process that requires ATP hydrolysis. Has a chymotrypsin-like activity. Plays a major role in the degradation of misfolded proteins.</text>
</comment>
<comment type="catalytic activity">
    <reaction evidence="1">
        <text>Hydrolysis of proteins to small peptides in the presence of ATP and magnesium. alpha-casein is the usual test substrate. In the absence of ATP, only oligopeptides shorter than five residues are hydrolyzed (such as succinyl-Leu-Tyr-|-NHMec, and Leu-Tyr-Leu-|-Tyr-Trp, in which cleavage of the -Tyr-|-Leu- and -Tyr-|-Trp bonds also occurs).</text>
        <dbReference type="EC" id="3.4.21.92"/>
    </reaction>
</comment>
<comment type="subunit">
    <text evidence="1">Fourteen ClpP subunits assemble into 2 heptameric rings which stack back to back to give a disk-like structure with a central cavity, resembling the structure of eukaryotic proteasomes.</text>
</comment>
<comment type="subcellular location">
    <subcellularLocation>
        <location evidence="1">Cytoplasm</location>
    </subcellularLocation>
</comment>
<comment type="similarity">
    <text evidence="1">Belongs to the peptidase S14 family.</text>
</comment>
<name>CLPP1_CHESB</name>
<feature type="chain" id="PRO_0000252825" description="ATP-dependent Clp protease proteolytic subunit 1">
    <location>
        <begin position="1"/>
        <end position="210"/>
    </location>
</feature>
<feature type="active site" description="Nucleophile" evidence="1">
    <location>
        <position position="106"/>
    </location>
</feature>
<feature type="active site" evidence="1">
    <location>
        <position position="131"/>
    </location>
</feature>
<reference key="1">
    <citation type="submission" date="2006-06" db="EMBL/GenBank/DDBJ databases">
        <title>Complete sequence of chromosome of Mesorhizobium sp. BNC1.</title>
        <authorList>
            <consortium name="US DOE Joint Genome Institute"/>
            <person name="Copeland A."/>
            <person name="Lucas S."/>
            <person name="Lapidus A."/>
            <person name="Barry K."/>
            <person name="Detter J.C."/>
            <person name="Glavina del Rio T."/>
            <person name="Hammon N."/>
            <person name="Israni S."/>
            <person name="Dalin E."/>
            <person name="Tice H."/>
            <person name="Pitluck S."/>
            <person name="Chertkov O."/>
            <person name="Brettin T."/>
            <person name="Bruce D."/>
            <person name="Han C."/>
            <person name="Tapia R."/>
            <person name="Gilna P."/>
            <person name="Schmutz J."/>
            <person name="Larimer F."/>
            <person name="Land M."/>
            <person name="Hauser L."/>
            <person name="Kyrpides N."/>
            <person name="Mikhailova N."/>
            <person name="Richardson P."/>
        </authorList>
    </citation>
    <scope>NUCLEOTIDE SEQUENCE [LARGE SCALE GENOMIC DNA]</scope>
    <source>
        <strain>BNC1</strain>
    </source>
</reference>
<sequence length="210" mass="23371">MKNPVETAMNLVPMVVEQTNRGERAYDIFSRLLKERIIFITGPVEDGMATLVCAQLLFLEAENPKKEIALYINSPGGVVTSGMAIYDTMQFIQPPVSTLCIGQAASMGSLLLCAGHKDMRFATPNARVMVHQPSGGFQGQASDIERHAQDIIKLKRRLNEIYVKHTGQDYDTIERTLDRDHFMTADEAQAFGLVDRVISEREAIEAPRTS</sequence>
<keyword id="KW-0963">Cytoplasm</keyword>
<keyword id="KW-0378">Hydrolase</keyword>
<keyword id="KW-0645">Protease</keyword>
<keyword id="KW-0720">Serine protease</keyword>